<organism>
    <name type="scientific">Syntrophotalea carbinolica (strain DSM 2380 / NBRC 103641 / GraBd1)</name>
    <name type="common">Pelobacter carbinolicus</name>
    <dbReference type="NCBI Taxonomy" id="338963"/>
    <lineage>
        <taxon>Bacteria</taxon>
        <taxon>Pseudomonadati</taxon>
        <taxon>Thermodesulfobacteriota</taxon>
        <taxon>Desulfuromonadia</taxon>
        <taxon>Desulfuromonadales</taxon>
        <taxon>Syntrophotaleaceae</taxon>
        <taxon>Syntrophotalea</taxon>
    </lineage>
</organism>
<protein>
    <recommendedName>
        <fullName evidence="2">Translation initiation factor IF-2</fullName>
    </recommendedName>
</protein>
<reference key="1">
    <citation type="submission" date="2005-10" db="EMBL/GenBank/DDBJ databases">
        <title>Complete sequence of Pelobacter carbinolicus DSM 2380.</title>
        <authorList>
            <person name="Copeland A."/>
            <person name="Lucas S."/>
            <person name="Lapidus A."/>
            <person name="Barry K."/>
            <person name="Detter J.C."/>
            <person name="Glavina T."/>
            <person name="Hammon N."/>
            <person name="Israni S."/>
            <person name="Pitluck S."/>
            <person name="Chertkov O."/>
            <person name="Schmutz J."/>
            <person name="Larimer F."/>
            <person name="Land M."/>
            <person name="Kyrpides N."/>
            <person name="Ivanova N."/>
            <person name="Richardson P."/>
        </authorList>
    </citation>
    <scope>NUCLEOTIDE SEQUENCE [LARGE SCALE GENOMIC DNA]</scope>
    <source>
        <strain>DSM 2380 / NBRC 103641 / GraBd1</strain>
    </source>
</reference>
<dbReference type="EMBL" id="CP000142">
    <property type="protein sequence ID" value="ABA88800.1"/>
    <property type="molecule type" value="Genomic_DNA"/>
</dbReference>
<dbReference type="RefSeq" id="WP_011341283.1">
    <property type="nucleotide sequence ID" value="NC_007498.2"/>
</dbReference>
<dbReference type="SMR" id="Q3A4A7"/>
<dbReference type="STRING" id="338963.Pcar_1555"/>
<dbReference type="KEGG" id="pca:Pcar_1555"/>
<dbReference type="eggNOG" id="COG0532">
    <property type="taxonomic scope" value="Bacteria"/>
</dbReference>
<dbReference type="HOGENOM" id="CLU_006301_5_1_7"/>
<dbReference type="OrthoDB" id="9811804at2"/>
<dbReference type="Proteomes" id="UP000002534">
    <property type="component" value="Chromosome"/>
</dbReference>
<dbReference type="GO" id="GO:0005829">
    <property type="term" value="C:cytosol"/>
    <property type="evidence" value="ECO:0007669"/>
    <property type="project" value="TreeGrafter"/>
</dbReference>
<dbReference type="GO" id="GO:0005525">
    <property type="term" value="F:GTP binding"/>
    <property type="evidence" value="ECO:0007669"/>
    <property type="project" value="UniProtKB-KW"/>
</dbReference>
<dbReference type="GO" id="GO:0003924">
    <property type="term" value="F:GTPase activity"/>
    <property type="evidence" value="ECO:0007669"/>
    <property type="project" value="UniProtKB-UniRule"/>
</dbReference>
<dbReference type="GO" id="GO:0003743">
    <property type="term" value="F:translation initiation factor activity"/>
    <property type="evidence" value="ECO:0007669"/>
    <property type="project" value="UniProtKB-UniRule"/>
</dbReference>
<dbReference type="CDD" id="cd01887">
    <property type="entry name" value="IF2_eIF5B"/>
    <property type="match status" value="1"/>
</dbReference>
<dbReference type="CDD" id="cd03702">
    <property type="entry name" value="IF2_mtIF2_II"/>
    <property type="match status" value="1"/>
</dbReference>
<dbReference type="CDD" id="cd03692">
    <property type="entry name" value="mtIF2_IVc"/>
    <property type="match status" value="1"/>
</dbReference>
<dbReference type="FunFam" id="2.40.30.10:FF:000007">
    <property type="entry name" value="Translation initiation factor IF-2"/>
    <property type="match status" value="1"/>
</dbReference>
<dbReference type="FunFam" id="2.40.30.10:FF:000008">
    <property type="entry name" value="Translation initiation factor IF-2"/>
    <property type="match status" value="1"/>
</dbReference>
<dbReference type="FunFam" id="3.40.50.10050:FF:000001">
    <property type="entry name" value="Translation initiation factor IF-2"/>
    <property type="match status" value="1"/>
</dbReference>
<dbReference type="FunFam" id="3.40.50.300:FF:000019">
    <property type="entry name" value="Translation initiation factor IF-2"/>
    <property type="match status" value="1"/>
</dbReference>
<dbReference type="Gene3D" id="1.10.10.2480">
    <property type="match status" value="1"/>
</dbReference>
<dbReference type="Gene3D" id="3.40.50.300">
    <property type="entry name" value="P-loop containing nucleotide triphosphate hydrolases"/>
    <property type="match status" value="1"/>
</dbReference>
<dbReference type="Gene3D" id="2.40.30.10">
    <property type="entry name" value="Translation factors"/>
    <property type="match status" value="2"/>
</dbReference>
<dbReference type="Gene3D" id="3.40.50.10050">
    <property type="entry name" value="Translation initiation factor IF- 2, domain 3"/>
    <property type="match status" value="1"/>
</dbReference>
<dbReference type="HAMAP" id="MF_00100_B">
    <property type="entry name" value="IF_2_B"/>
    <property type="match status" value="1"/>
</dbReference>
<dbReference type="InterPro" id="IPR053905">
    <property type="entry name" value="EF-G-like_DII"/>
</dbReference>
<dbReference type="InterPro" id="IPR004161">
    <property type="entry name" value="EFTu-like_2"/>
</dbReference>
<dbReference type="InterPro" id="IPR044145">
    <property type="entry name" value="IF2_II"/>
</dbReference>
<dbReference type="InterPro" id="IPR006847">
    <property type="entry name" value="IF2_N"/>
</dbReference>
<dbReference type="InterPro" id="IPR027417">
    <property type="entry name" value="P-loop_NTPase"/>
</dbReference>
<dbReference type="InterPro" id="IPR005225">
    <property type="entry name" value="Small_GTP-bd"/>
</dbReference>
<dbReference type="InterPro" id="IPR000795">
    <property type="entry name" value="T_Tr_GTP-bd_dom"/>
</dbReference>
<dbReference type="InterPro" id="IPR000178">
    <property type="entry name" value="TF_IF2_bacterial-like"/>
</dbReference>
<dbReference type="InterPro" id="IPR015760">
    <property type="entry name" value="TIF_IF2"/>
</dbReference>
<dbReference type="InterPro" id="IPR023115">
    <property type="entry name" value="TIF_IF2_dom3"/>
</dbReference>
<dbReference type="InterPro" id="IPR036925">
    <property type="entry name" value="TIF_IF2_dom3_sf"/>
</dbReference>
<dbReference type="InterPro" id="IPR009000">
    <property type="entry name" value="Transl_B-barrel_sf"/>
</dbReference>
<dbReference type="NCBIfam" id="TIGR00487">
    <property type="entry name" value="IF-2"/>
    <property type="match status" value="1"/>
</dbReference>
<dbReference type="NCBIfam" id="TIGR00231">
    <property type="entry name" value="small_GTP"/>
    <property type="match status" value="1"/>
</dbReference>
<dbReference type="PANTHER" id="PTHR43381:SF5">
    <property type="entry name" value="TR-TYPE G DOMAIN-CONTAINING PROTEIN"/>
    <property type="match status" value="1"/>
</dbReference>
<dbReference type="PANTHER" id="PTHR43381">
    <property type="entry name" value="TRANSLATION INITIATION FACTOR IF-2-RELATED"/>
    <property type="match status" value="1"/>
</dbReference>
<dbReference type="Pfam" id="PF22042">
    <property type="entry name" value="EF-G_D2"/>
    <property type="match status" value="1"/>
</dbReference>
<dbReference type="Pfam" id="PF00009">
    <property type="entry name" value="GTP_EFTU"/>
    <property type="match status" value="1"/>
</dbReference>
<dbReference type="Pfam" id="PF03144">
    <property type="entry name" value="GTP_EFTU_D2"/>
    <property type="match status" value="1"/>
</dbReference>
<dbReference type="Pfam" id="PF11987">
    <property type="entry name" value="IF-2"/>
    <property type="match status" value="1"/>
</dbReference>
<dbReference type="Pfam" id="PF04760">
    <property type="entry name" value="IF2_N"/>
    <property type="match status" value="2"/>
</dbReference>
<dbReference type="SUPFAM" id="SSF52156">
    <property type="entry name" value="Initiation factor IF2/eIF5b, domain 3"/>
    <property type="match status" value="1"/>
</dbReference>
<dbReference type="SUPFAM" id="SSF52540">
    <property type="entry name" value="P-loop containing nucleoside triphosphate hydrolases"/>
    <property type="match status" value="1"/>
</dbReference>
<dbReference type="SUPFAM" id="SSF50447">
    <property type="entry name" value="Translation proteins"/>
    <property type="match status" value="2"/>
</dbReference>
<dbReference type="PROSITE" id="PS51722">
    <property type="entry name" value="G_TR_2"/>
    <property type="match status" value="1"/>
</dbReference>
<dbReference type="PROSITE" id="PS01176">
    <property type="entry name" value="IF2"/>
    <property type="match status" value="1"/>
</dbReference>
<sequence>MGKKIRVYELAQKMGVDNKVLLEKLHEAGIDAKSHMSVLSEEDVEKLDEAPAKVERVEERRITAGVIRRRRKEVPQEEKAAPPAAAEEPSSVDTAVAEEAPAEEVQPVSDQPEIAVEPPPAGKQEEVAAPAPEPKAEEPVVEEVIAEPAVEEVVEEPSAVEQEEHVETTPVAEEEPKVEEQPSVEAESKAVSGELEESKTADQSKGQSEAAEVSVTKEKPKVEKATANRAKILGRVELSTLTSPPKRQERAKNGKGRPERPKGAKPSGGPAPRAKEAAPQAAVPFDGGPAPDKEVRGGKKGKKGKGNSYDKDKGFADGGKGRRARRQVYEPERDERRMRRGKKTPKPQKKTEVTVSKAIKRIIRISDVITVGELAKRMGVKSKDLITELMRQGQMVTINHPLDFETAAILASEFNYEVENVAFDEENLLADTAAVTEEGDSEEGCVPRPPVVTIMGHVDHGKTSLLDAIRATNVTGGEAGGITQHIGAYDVSVDDKKITFLDTPGHEAFTSMRARGAKVTDIVILVVAADDGVMPQTKEAINHSKAAGVPIIVAVNKMDKPDANSDRVKQELTEFEMIPEEWGGDTIFVEVSAKNRTNLDSLLEMVLLQAEVLELKANPNKRAKGAIVEARLDRGRGPVATVLVEEGTLRIGDPIVSGLHYGKVRTMTNDRGERLEEAGPACPVEVTGLSGTPTAGDSFHAVESEKDAKEVATHRQRKVREQELASTSKISLEQLYARMQEGEVQELKVIIKADVQGSVEAVRDSLVKLSTDACRLVVIHTAVGGINESDVSLASASDAIILGFNVRAESKAAALAETEGVDIRFYNVIYDAVNDIRDAMEGLLAPTLREKHLGKVEVRETFHVSKVGTIAGCYVTEGKVLRNAQVRLIRDHVVIWEGKLASLKRFKDDAREVQNGYECGLSLENYNDIKVGDIIEVFEMEEVKTSL</sequence>
<name>IF2_SYNC1</name>
<feature type="chain" id="PRO_0000228223" description="Translation initiation factor IF-2">
    <location>
        <begin position="1"/>
        <end position="947"/>
    </location>
</feature>
<feature type="domain" description="tr-type G">
    <location>
        <begin position="447"/>
        <end position="616"/>
    </location>
</feature>
<feature type="region of interest" description="Disordered" evidence="3">
    <location>
        <begin position="69"/>
        <end position="353"/>
    </location>
</feature>
<feature type="region of interest" description="G1" evidence="1">
    <location>
        <begin position="456"/>
        <end position="463"/>
    </location>
</feature>
<feature type="region of interest" description="G2" evidence="1">
    <location>
        <begin position="481"/>
        <end position="485"/>
    </location>
</feature>
<feature type="region of interest" description="G3" evidence="1">
    <location>
        <begin position="502"/>
        <end position="505"/>
    </location>
</feature>
<feature type="region of interest" description="G4" evidence="1">
    <location>
        <begin position="556"/>
        <end position="559"/>
    </location>
</feature>
<feature type="region of interest" description="G5" evidence="1">
    <location>
        <begin position="592"/>
        <end position="594"/>
    </location>
</feature>
<feature type="compositionally biased region" description="Low complexity" evidence="3">
    <location>
        <begin position="81"/>
        <end position="108"/>
    </location>
</feature>
<feature type="compositionally biased region" description="Acidic residues" evidence="3">
    <location>
        <begin position="139"/>
        <end position="155"/>
    </location>
</feature>
<feature type="compositionally biased region" description="Basic and acidic residues" evidence="3">
    <location>
        <begin position="215"/>
        <end position="226"/>
    </location>
</feature>
<feature type="compositionally biased region" description="Basic and acidic residues" evidence="3">
    <location>
        <begin position="246"/>
        <end position="262"/>
    </location>
</feature>
<feature type="compositionally biased region" description="Low complexity" evidence="3">
    <location>
        <begin position="264"/>
        <end position="284"/>
    </location>
</feature>
<feature type="compositionally biased region" description="Basic and acidic residues" evidence="3">
    <location>
        <begin position="327"/>
        <end position="337"/>
    </location>
</feature>
<feature type="compositionally biased region" description="Basic residues" evidence="3">
    <location>
        <begin position="338"/>
        <end position="348"/>
    </location>
</feature>
<feature type="binding site" evidence="2">
    <location>
        <begin position="456"/>
        <end position="463"/>
    </location>
    <ligand>
        <name>GTP</name>
        <dbReference type="ChEBI" id="CHEBI:37565"/>
    </ligand>
</feature>
<feature type="binding site" evidence="2">
    <location>
        <begin position="502"/>
        <end position="506"/>
    </location>
    <ligand>
        <name>GTP</name>
        <dbReference type="ChEBI" id="CHEBI:37565"/>
    </ligand>
</feature>
<feature type="binding site" evidence="2">
    <location>
        <begin position="556"/>
        <end position="559"/>
    </location>
    <ligand>
        <name>GTP</name>
        <dbReference type="ChEBI" id="CHEBI:37565"/>
    </ligand>
</feature>
<proteinExistence type="inferred from homology"/>
<evidence type="ECO:0000250" key="1"/>
<evidence type="ECO:0000255" key="2">
    <source>
        <dbReference type="HAMAP-Rule" id="MF_00100"/>
    </source>
</evidence>
<evidence type="ECO:0000256" key="3">
    <source>
        <dbReference type="SAM" id="MobiDB-lite"/>
    </source>
</evidence>
<gene>
    <name evidence="2" type="primary">infB</name>
    <name type="ordered locus">Pcar_1555</name>
</gene>
<keyword id="KW-0963">Cytoplasm</keyword>
<keyword id="KW-0342">GTP-binding</keyword>
<keyword id="KW-0396">Initiation factor</keyword>
<keyword id="KW-0547">Nucleotide-binding</keyword>
<keyword id="KW-0648">Protein biosynthesis</keyword>
<keyword id="KW-1185">Reference proteome</keyword>
<comment type="function">
    <text evidence="2">One of the essential components for the initiation of protein synthesis. Protects formylmethionyl-tRNA from spontaneous hydrolysis and promotes its binding to the 30S ribosomal subunits. Also involved in the hydrolysis of GTP during the formation of the 70S ribosomal complex.</text>
</comment>
<comment type="subcellular location">
    <subcellularLocation>
        <location evidence="2">Cytoplasm</location>
    </subcellularLocation>
</comment>
<comment type="similarity">
    <text evidence="2">Belongs to the TRAFAC class translation factor GTPase superfamily. Classic translation factor GTPase family. IF-2 subfamily.</text>
</comment>
<accession>Q3A4A7</accession>